<keyword id="KW-0130">Cell adhesion</keyword>
<keyword id="KW-0965">Cell junction</keyword>
<keyword id="KW-1003">Cell membrane</keyword>
<keyword id="KW-1015">Disulfide bond</keyword>
<keyword id="KW-0325">Glycoprotein</keyword>
<keyword id="KW-0336">GPI-anchor</keyword>
<keyword id="KW-0393">Immunoglobulin domain</keyword>
<keyword id="KW-0449">Lipoprotein</keyword>
<keyword id="KW-0472">Membrane</keyword>
<keyword id="KW-1185">Reference proteome</keyword>
<keyword id="KW-0677">Repeat</keyword>
<keyword id="KW-0732">Signal</keyword>
<organism>
    <name type="scientific">Drosophila melanogaster</name>
    <name type="common">Fruit fly</name>
    <dbReference type="NCBI Taxonomy" id="7227"/>
    <lineage>
        <taxon>Eukaryota</taxon>
        <taxon>Metazoa</taxon>
        <taxon>Ecdysozoa</taxon>
        <taxon>Arthropoda</taxon>
        <taxon>Hexapoda</taxon>
        <taxon>Insecta</taxon>
        <taxon>Pterygota</taxon>
        <taxon>Neoptera</taxon>
        <taxon>Endopterygota</taxon>
        <taxon>Diptera</taxon>
        <taxon>Brachycera</taxon>
        <taxon>Muscomorpha</taxon>
        <taxon>Ephydroidea</taxon>
        <taxon>Drosophilidae</taxon>
        <taxon>Drosophila</taxon>
        <taxon>Sophophora</taxon>
    </lineage>
</organism>
<sequence>MLAKIGLLASILVLNLVGQITPQFSENLPDPDPQSGQQPQNYQPSYNKDYSPRYNPLYTGQQSADPNQFDNTLVDGQSPNTYKGYYDGRAGGGGLGGNVVGPGNNLGGLGPQYDPFNRNSIGSAGVSYRDAYTDEDNFCPEHWVSFRQTCYRFIRSPKRNWAEAKKICKAHNADLINVDNVEKHSFILKNLILQNQRQNRFFISARQTGPLNWVNDDNTQLVQIEDSFSMDEQVPLENEDLHDNRFLVQNDLNNQNINNPNQFYNSLPGTVNQRNQNNLRGFIGPNQPYGDNRYVRDRVVYAFSKKRDRWMFMPAYEIELNLFICESKVLYSSDNVNIKLDDKRPYHYGLDINDMERIPRGPYFVKQPNDTTFDVNKNRLINDVTLSCLANGYPTPSYTWYREVYVDDRLEYQKIDPLAQDRYTISGGNLIIYEPKQALDQGAYHCVAENKFGRIRSESAHLNFGFIMEFNLKRSAETSEMNWGKSIFCDPPQHYPDVRYYWARDYFPNFVEEDQRVFVSRDGALYFSFIETVDRANYSCTVQTLVSDTGRNGPFFPLRVTPNSNYQALIFANTFPKVFPEAPVAGDEIRLECMAFGYPIPSYNWTRQGLPLQRNAYTINYGRVLIIQNATTNDNGEYSCTITNPRKTLMKSIYINIQMRPQFTIPLKDMIKDYNSDVTFICEAFAIPDANYTWYKNAERLDPANINRDRYIIQDNVLTIKFLEKDKDDAMYQCGAQNQLKTSFSSAQLRVLSMKPSFKKHPLESEVYAVYNGNTTIVCDPEAAPRPKFQWKKDGQVIGSGGHRRILPSGTLTISPTSRDDEGIYTCIASNQAGTDESHARVIVLQEIRFIETPPQRIVSKEHDLIFLHCEAAFDELLDIAYVWKHNGEVLKNNHDGTGRIIVDWNRLTVHNTSMRDAGDYECVVKSAVNEISSKTSVSIEGAPGAPGGVQVIQISKTKAIIEWVDGSHNGRAIRYYNILGRTNWNRTWVNVSTHVQAREVDRYTSRQQAEVVNLTPWSAYEFSVTAVNDLGIGTPSAPSPIYSTYEDKPYIAPRNVGGGGGKIGDLTITWDPLLPQEQHSHGIHYKVFWKLKGAIEWASDEIKKQDHMGVAVVNIPLNNYYTEYEVKVQAINSVGKGPESEIAVIHSAEDMPQVAPQKPIALAYNSTCFNVTWQPIDMSRENIRGKLIGHRLKYWKTTHQEEDSVYYLSRTTRNWALIVGLQPDTYYFVKVMAYNAAGEGPESERFEERTYRKAPQKPPSSVHVYGINPSTVRVVWRYVSPSQDEEPVEGYKVRIWESDQNMITANNTIVPIGQKLESYINNLTPGKSYNMRVLAYSNGGDGRMSSPTLHFQMGKTTRNGANTRHGHNINTALILSTLLLISTFLYTSQ</sequence>
<dbReference type="EMBL" id="AY229991">
    <property type="protein sequence ID" value="AAP44004.1"/>
    <property type="molecule type" value="mRNA"/>
</dbReference>
<dbReference type="EMBL" id="AE014297">
    <property type="protein sequence ID" value="AAF52137.2"/>
    <property type="molecule type" value="Genomic_DNA"/>
</dbReference>
<dbReference type="EMBL" id="BT021333">
    <property type="protein sequence ID" value="AAX33481.1"/>
    <property type="molecule type" value="mRNA"/>
</dbReference>
<dbReference type="EMBL" id="AY095040">
    <property type="protein sequence ID" value="AAM11368.1"/>
    <property type="status" value="ALT_INIT"/>
    <property type="molecule type" value="mRNA"/>
</dbReference>
<dbReference type="RefSeq" id="NP_649461.2">
    <property type="nucleotide sequence ID" value="NM_141204.4"/>
</dbReference>
<dbReference type="SMR" id="Q9VN14"/>
<dbReference type="BioGRID" id="65773">
    <property type="interactions" value="7"/>
</dbReference>
<dbReference type="FunCoup" id="Q9VN14">
    <property type="interactions" value="462"/>
</dbReference>
<dbReference type="IntAct" id="Q9VN14">
    <property type="interactions" value="1"/>
</dbReference>
<dbReference type="STRING" id="7227.FBpp0078557"/>
<dbReference type="GlyCosmos" id="Q9VN14">
    <property type="glycosylation" value="12 sites, No reported glycans"/>
</dbReference>
<dbReference type="GlyGen" id="Q9VN14">
    <property type="glycosylation" value="13 sites"/>
</dbReference>
<dbReference type="iPTMnet" id="Q9VN14"/>
<dbReference type="PaxDb" id="7227-FBpp0078557"/>
<dbReference type="DNASU" id="40553"/>
<dbReference type="EnsemblMetazoa" id="FBtr0078917">
    <property type="protein sequence ID" value="FBpp0078557"/>
    <property type="gene ID" value="FBgn0037240"/>
</dbReference>
<dbReference type="GeneID" id="40553"/>
<dbReference type="KEGG" id="dme:Dmel_CG1084"/>
<dbReference type="UCSC" id="CG1084-RA">
    <property type="organism name" value="d. melanogaster"/>
</dbReference>
<dbReference type="AGR" id="FB:FBgn0037240"/>
<dbReference type="CTD" id="40553"/>
<dbReference type="FlyBase" id="FBgn0037240">
    <property type="gene designation" value="Cont"/>
</dbReference>
<dbReference type="VEuPathDB" id="VectorBase:FBgn0037240"/>
<dbReference type="eggNOG" id="KOG3513">
    <property type="taxonomic scope" value="Eukaryota"/>
</dbReference>
<dbReference type="GeneTree" id="ENSGT00940000170323"/>
<dbReference type="HOGENOM" id="CLU_005756_0_0_1"/>
<dbReference type="InParanoid" id="Q9VN14"/>
<dbReference type="OMA" id="KICKAYT"/>
<dbReference type="OrthoDB" id="3666223at2759"/>
<dbReference type="PhylomeDB" id="Q9VN14"/>
<dbReference type="BioGRID-ORCS" id="40553">
    <property type="hits" value="0 hits in 3 CRISPR screens"/>
</dbReference>
<dbReference type="GenomeRNAi" id="40553"/>
<dbReference type="PRO" id="PR:Q9VN14"/>
<dbReference type="Proteomes" id="UP000000803">
    <property type="component" value="Chromosome 3R"/>
</dbReference>
<dbReference type="Bgee" id="FBgn0037240">
    <property type="expression patterns" value="Expressed in eye disc (Drosophila) and 183 other cell types or tissues"/>
</dbReference>
<dbReference type="ExpressionAtlas" id="Q9VN14">
    <property type="expression patterns" value="baseline and differential"/>
</dbReference>
<dbReference type="GO" id="GO:0030424">
    <property type="term" value="C:axon"/>
    <property type="evidence" value="ECO:0000318"/>
    <property type="project" value="GO_Central"/>
</dbReference>
<dbReference type="GO" id="GO:0005886">
    <property type="term" value="C:plasma membrane"/>
    <property type="evidence" value="ECO:0007005"/>
    <property type="project" value="FlyBase"/>
</dbReference>
<dbReference type="GO" id="GO:0005918">
    <property type="term" value="C:septate junction"/>
    <property type="evidence" value="ECO:0000314"/>
    <property type="project" value="UniProtKB"/>
</dbReference>
<dbReference type="GO" id="GO:0098552">
    <property type="term" value="C:side of membrane"/>
    <property type="evidence" value="ECO:0007669"/>
    <property type="project" value="UniProtKB-KW"/>
</dbReference>
<dbReference type="GO" id="GO:0098632">
    <property type="term" value="F:cell-cell adhesion mediator activity"/>
    <property type="evidence" value="ECO:0000318"/>
    <property type="project" value="GO_Central"/>
</dbReference>
<dbReference type="GO" id="GO:0008366">
    <property type="term" value="P:axon ensheathment"/>
    <property type="evidence" value="ECO:0000315"/>
    <property type="project" value="FlyBase"/>
</dbReference>
<dbReference type="GO" id="GO:0007411">
    <property type="term" value="P:axon guidance"/>
    <property type="evidence" value="ECO:0000318"/>
    <property type="project" value="GO_Central"/>
</dbReference>
<dbReference type="GO" id="GO:0061343">
    <property type="term" value="P:cell adhesion involved in heart morphogenesis"/>
    <property type="evidence" value="ECO:0000315"/>
    <property type="project" value="FlyBase"/>
</dbReference>
<dbReference type="GO" id="GO:0070593">
    <property type="term" value="P:dendrite self-avoidance"/>
    <property type="evidence" value="ECO:0000318"/>
    <property type="project" value="GO_Central"/>
</dbReference>
<dbReference type="GO" id="GO:0060857">
    <property type="term" value="P:establishment of glial blood-brain barrier"/>
    <property type="evidence" value="ECO:0000315"/>
    <property type="project" value="FlyBase"/>
</dbReference>
<dbReference type="GO" id="GO:0045197">
    <property type="term" value="P:establishment or maintenance of epithelial cell apical/basal polarity"/>
    <property type="evidence" value="ECO:0000305"/>
    <property type="project" value="UniProtKB"/>
</dbReference>
<dbReference type="GO" id="GO:0007156">
    <property type="term" value="P:homophilic cell adhesion via plasma membrane adhesion molecules"/>
    <property type="evidence" value="ECO:0000318"/>
    <property type="project" value="GO_Central"/>
</dbReference>
<dbReference type="GO" id="GO:0021682">
    <property type="term" value="P:nerve maturation"/>
    <property type="evidence" value="ECO:0000315"/>
    <property type="project" value="FlyBase"/>
</dbReference>
<dbReference type="GO" id="GO:0019991">
    <property type="term" value="P:septate junction assembly"/>
    <property type="evidence" value="ECO:0000315"/>
    <property type="project" value="FlyBase"/>
</dbReference>
<dbReference type="CDD" id="cd00063">
    <property type="entry name" value="FN3"/>
    <property type="match status" value="4"/>
</dbReference>
<dbReference type="CDD" id="cd00096">
    <property type="entry name" value="Ig"/>
    <property type="match status" value="2"/>
</dbReference>
<dbReference type="FunFam" id="2.60.40.10:FF:001933">
    <property type="entry name" value="Blast:Contactin"/>
    <property type="match status" value="1"/>
</dbReference>
<dbReference type="FunFam" id="2.60.40.10:FF:001529">
    <property type="entry name" value="Cell adhesion molecule"/>
    <property type="match status" value="1"/>
</dbReference>
<dbReference type="FunFam" id="2.60.40.10:FF:001861">
    <property type="entry name" value="Cell adhesion molecule"/>
    <property type="match status" value="1"/>
</dbReference>
<dbReference type="FunFam" id="2.60.40.10:FF:002036">
    <property type="entry name" value="Contactin"/>
    <property type="match status" value="1"/>
</dbReference>
<dbReference type="FunFam" id="2.60.40.10:FF:001698">
    <property type="entry name" value="contactin"/>
    <property type="match status" value="1"/>
</dbReference>
<dbReference type="FunFam" id="2.60.40.10:FF:000035">
    <property type="entry name" value="Contactin 1"/>
    <property type="match status" value="1"/>
</dbReference>
<dbReference type="FunFam" id="2.60.40.10:FF:000047">
    <property type="entry name" value="Contactin 1"/>
    <property type="match status" value="1"/>
</dbReference>
<dbReference type="FunFam" id="2.60.40.10:FF:000064">
    <property type="entry name" value="Contactin 1"/>
    <property type="match status" value="1"/>
</dbReference>
<dbReference type="FunFam" id="2.60.40.10:FF:001582">
    <property type="entry name" value="Receptor tyrosine kinase Flt1b"/>
    <property type="match status" value="1"/>
</dbReference>
<dbReference type="Gene3D" id="2.60.40.10">
    <property type="entry name" value="Immunoglobulins"/>
    <property type="match status" value="10"/>
</dbReference>
<dbReference type="Gene3D" id="3.10.100.10">
    <property type="entry name" value="Mannose-Binding Protein A, subunit A"/>
    <property type="match status" value="1"/>
</dbReference>
<dbReference type="InterPro" id="IPR001304">
    <property type="entry name" value="C-type_lectin-like"/>
</dbReference>
<dbReference type="InterPro" id="IPR016186">
    <property type="entry name" value="C-type_lectin-like/link_sf"/>
</dbReference>
<dbReference type="InterPro" id="IPR016187">
    <property type="entry name" value="CTDL_fold"/>
</dbReference>
<dbReference type="InterPro" id="IPR003961">
    <property type="entry name" value="FN3_dom"/>
</dbReference>
<dbReference type="InterPro" id="IPR036116">
    <property type="entry name" value="FN3_sf"/>
</dbReference>
<dbReference type="InterPro" id="IPR007110">
    <property type="entry name" value="Ig-like_dom"/>
</dbReference>
<dbReference type="InterPro" id="IPR036179">
    <property type="entry name" value="Ig-like_dom_sf"/>
</dbReference>
<dbReference type="InterPro" id="IPR013783">
    <property type="entry name" value="Ig-like_fold"/>
</dbReference>
<dbReference type="InterPro" id="IPR013098">
    <property type="entry name" value="Ig_I-set"/>
</dbReference>
<dbReference type="InterPro" id="IPR003599">
    <property type="entry name" value="Ig_sub"/>
</dbReference>
<dbReference type="InterPro" id="IPR003598">
    <property type="entry name" value="Ig_sub2"/>
</dbReference>
<dbReference type="PANTHER" id="PTHR44170:SF6">
    <property type="entry name" value="CONTACTIN"/>
    <property type="match status" value="1"/>
</dbReference>
<dbReference type="PANTHER" id="PTHR44170">
    <property type="entry name" value="PROTEIN SIDEKICK"/>
    <property type="match status" value="1"/>
</dbReference>
<dbReference type="Pfam" id="PF00041">
    <property type="entry name" value="fn3"/>
    <property type="match status" value="3"/>
</dbReference>
<dbReference type="Pfam" id="PF07679">
    <property type="entry name" value="I-set"/>
    <property type="match status" value="1"/>
</dbReference>
<dbReference type="Pfam" id="PF13927">
    <property type="entry name" value="Ig_3"/>
    <property type="match status" value="4"/>
</dbReference>
<dbReference type="Pfam" id="PF05473">
    <property type="entry name" value="UL45"/>
    <property type="match status" value="1"/>
</dbReference>
<dbReference type="SMART" id="SM00034">
    <property type="entry name" value="CLECT"/>
    <property type="match status" value="1"/>
</dbReference>
<dbReference type="SMART" id="SM00060">
    <property type="entry name" value="FN3"/>
    <property type="match status" value="4"/>
</dbReference>
<dbReference type="SMART" id="SM00409">
    <property type="entry name" value="IG"/>
    <property type="match status" value="5"/>
</dbReference>
<dbReference type="SMART" id="SM00408">
    <property type="entry name" value="IGc2"/>
    <property type="match status" value="5"/>
</dbReference>
<dbReference type="SUPFAM" id="SSF56436">
    <property type="entry name" value="C-type lectin-like"/>
    <property type="match status" value="1"/>
</dbReference>
<dbReference type="SUPFAM" id="SSF49265">
    <property type="entry name" value="Fibronectin type III"/>
    <property type="match status" value="2"/>
</dbReference>
<dbReference type="SUPFAM" id="SSF48726">
    <property type="entry name" value="Immunoglobulin"/>
    <property type="match status" value="6"/>
</dbReference>
<dbReference type="PROSITE" id="PS50853">
    <property type="entry name" value="FN3"/>
    <property type="match status" value="4"/>
</dbReference>
<dbReference type="PROSITE" id="PS50835">
    <property type="entry name" value="IG_LIKE"/>
    <property type="match status" value="6"/>
</dbReference>
<reference key="1">
    <citation type="journal article" date="2004" name="Development">
        <title>Drosophila contactin, a homolog of vertebrate contactin, is required for septate junction organization and paracellular barrier function.</title>
        <authorList>
            <person name="Faivre-Sarrailh C."/>
            <person name="Banerjee S."/>
            <person name="Li J."/>
            <person name="Hortsch M."/>
            <person name="Laval M."/>
            <person name="Bhat M.A."/>
        </authorList>
    </citation>
    <scope>NUCLEOTIDE SEQUENCE [MRNA]</scope>
    <scope>FUNCTION</scope>
    <scope>SUBCELLULAR LOCATION</scope>
    <scope>TISSUE SPECIFICITY</scope>
    <scope>GPI-ANCHOR</scope>
    <scope>GLYCOSYLATION</scope>
    <scope>IDENTIFICATION IN A COMPLEX WITH NRX AND NRG</scope>
    <source>
        <strain>Oregon-R</strain>
        <tissue>Larva</tissue>
    </source>
</reference>
<reference key="2">
    <citation type="journal article" date="2000" name="Science">
        <title>The genome sequence of Drosophila melanogaster.</title>
        <authorList>
            <person name="Adams M.D."/>
            <person name="Celniker S.E."/>
            <person name="Holt R.A."/>
            <person name="Evans C.A."/>
            <person name="Gocayne J.D."/>
            <person name="Amanatides P.G."/>
            <person name="Scherer S.E."/>
            <person name="Li P.W."/>
            <person name="Hoskins R.A."/>
            <person name="Galle R.F."/>
            <person name="George R.A."/>
            <person name="Lewis S.E."/>
            <person name="Richards S."/>
            <person name="Ashburner M."/>
            <person name="Henderson S.N."/>
            <person name="Sutton G.G."/>
            <person name="Wortman J.R."/>
            <person name="Yandell M.D."/>
            <person name="Zhang Q."/>
            <person name="Chen L.X."/>
            <person name="Brandon R.C."/>
            <person name="Rogers Y.-H.C."/>
            <person name="Blazej R.G."/>
            <person name="Champe M."/>
            <person name="Pfeiffer B.D."/>
            <person name="Wan K.H."/>
            <person name="Doyle C."/>
            <person name="Baxter E.G."/>
            <person name="Helt G."/>
            <person name="Nelson C.R."/>
            <person name="Miklos G.L.G."/>
            <person name="Abril J.F."/>
            <person name="Agbayani A."/>
            <person name="An H.-J."/>
            <person name="Andrews-Pfannkoch C."/>
            <person name="Baldwin D."/>
            <person name="Ballew R.M."/>
            <person name="Basu A."/>
            <person name="Baxendale J."/>
            <person name="Bayraktaroglu L."/>
            <person name="Beasley E.M."/>
            <person name="Beeson K.Y."/>
            <person name="Benos P.V."/>
            <person name="Berman B.P."/>
            <person name="Bhandari D."/>
            <person name="Bolshakov S."/>
            <person name="Borkova D."/>
            <person name="Botchan M.R."/>
            <person name="Bouck J."/>
            <person name="Brokstein P."/>
            <person name="Brottier P."/>
            <person name="Burtis K.C."/>
            <person name="Busam D.A."/>
            <person name="Butler H."/>
            <person name="Cadieu E."/>
            <person name="Center A."/>
            <person name="Chandra I."/>
            <person name="Cherry J.M."/>
            <person name="Cawley S."/>
            <person name="Dahlke C."/>
            <person name="Davenport L.B."/>
            <person name="Davies P."/>
            <person name="de Pablos B."/>
            <person name="Delcher A."/>
            <person name="Deng Z."/>
            <person name="Mays A.D."/>
            <person name="Dew I."/>
            <person name="Dietz S.M."/>
            <person name="Dodson K."/>
            <person name="Doup L.E."/>
            <person name="Downes M."/>
            <person name="Dugan-Rocha S."/>
            <person name="Dunkov B.C."/>
            <person name="Dunn P."/>
            <person name="Durbin K.J."/>
            <person name="Evangelista C.C."/>
            <person name="Ferraz C."/>
            <person name="Ferriera S."/>
            <person name="Fleischmann W."/>
            <person name="Fosler C."/>
            <person name="Gabrielian A.E."/>
            <person name="Garg N.S."/>
            <person name="Gelbart W.M."/>
            <person name="Glasser K."/>
            <person name="Glodek A."/>
            <person name="Gong F."/>
            <person name="Gorrell J.H."/>
            <person name="Gu Z."/>
            <person name="Guan P."/>
            <person name="Harris M."/>
            <person name="Harris N.L."/>
            <person name="Harvey D.A."/>
            <person name="Heiman T.J."/>
            <person name="Hernandez J.R."/>
            <person name="Houck J."/>
            <person name="Hostin D."/>
            <person name="Houston K.A."/>
            <person name="Howland T.J."/>
            <person name="Wei M.-H."/>
            <person name="Ibegwam C."/>
            <person name="Jalali M."/>
            <person name="Kalush F."/>
            <person name="Karpen G.H."/>
            <person name="Ke Z."/>
            <person name="Kennison J.A."/>
            <person name="Ketchum K.A."/>
            <person name="Kimmel B.E."/>
            <person name="Kodira C.D."/>
            <person name="Kraft C.L."/>
            <person name="Kravitz S."/>
            <person name="Kulp D."/>
            <person name="Lai Z."/>
            <person name="Lasko P."/>
            <person name="Lei Y."/>
            <person name="Levitsky A.A."/>
            <person name="Li J.H."/>
            <person name="Li Z."/>
            <person name="Liang Y."/>
            <person name="Lin X."/>
            <person name="Liu X."/>
            <person name="Mattei B."/>
            <person name="McIntosh T.C."/>
            <person name="McLeod M.P."/>
            <person name="McPherson D."/>
            <person name="Merkulov G."/>
            <person name="Milshina N.V."/>
            <person name="Mobarry C."/>
            <person name="Morris J."/>
            <person name="Moshrefi A."/>
            <person name="Mount S.M."/>
            <person name="Moy M."/>
            <person name="Murphy B."/>
            <person name="Murphy L."/>
            <person name="Muzny D.M."/>
            <person name="Nelson D.L."/>
            <person name="Nelson D.R."/>
            <person name="Nelson K.A."/>
            <person name="Nixon K."/>
            <person name="Nusskern D.R."/>
            <person name="Pacleb J.M."/>
            <person name="Palazzolo M."/>
            <person name="Pittman G.S."/>
            <person name="Pan S."/>
            <person name="Pollard J."/>
            <person name="Puri V."/>
            <person name="Reese M.G."/>
            <person name="Reinert K."/>
            <person name="Remington K."/>
            <person name="Saunders R.D.C."/>
            <person name="Scheeler F."/>
            <person name="Shen H."/>
            <person name="Shue B.C."/>
            <person name="Siden-Kiamos I."/>
            <person name="Simpson M."/>
            <person name="Skupski M.P."/>
            <person name="Smith T.J."/>
            <person name="Spier E."/>
            <person name="Spradling A.C."/>
            <person name="Stapleton M."/>
            <person name="Strong R."/>
            <person name="Sun E."/>
            <person name="Svirskas R."/>
            <person name="Tector C."/>
            <person name="Turner R."/>
            <person name="Venter E."/>
            <person name="Wang A.H."/>
            <person name="Wang X."/>
            <person name="Wang Z.-Y."/>
            <person name="Wassarman D.A."/>
            <person name="Weinstock G.M."/>
            <person name="Weissenbach J."/>
            <person name="Williams S.M."/>
            <person name="Woodage T."/>
            <person name="Worley K.C."/>
            <person name="Wu D."/>
            <person name="Yang S."/>
            <person name="Yao Q.A."/>
            <person name="Ye J."/>
            <person name="Yeh R.-F."/>
            <person name="Zaveri J.S."/>
            <person name="Zhan M."/>
            <person name="Zhang G."/>
            <person name="Zhao Q."/>
            <person name="Zheng L."/>
            <person name="Zheng X.H."/>
            <person name="Zhong F.N."/>
            <person name="Zhong W."/>
            <person name="Zhou X."/>
            <person name="Zhu S.C."/>
            <person name="Zhu X."/>
            <person name="Smith H.O."/>
            <person name="Gibbs R.A."/>
            <person name="Myers E.W."/>
            <person name="Rubin G.M."/>
            <person name="Venter J.C."/>
        </authorList>
    </citation>
    <scope>NUCLEOTIDE SEQUENCE [LARGE SCALE GENOMIC DNA]</scope>
    <source>
        <strain>Berkeley</strain>
    </source>
</reference>
<reference key="3">
    <citation type="journal article" date="2002" name="Genome Biol.">
        <title>Annotation of the Drosophila melanogaster euchromatic genome: a systematic review.</title>
        <authorList>
            <person name="Misra S."/>
            <person name="Crosby M.A."/>
            <person name="Mungall C.J."/>
            <person name="Matthews B.B."/>
            <person name="Campbell K.S."/>
            <person name="Hradecky P."/>
            <person name="Huang Y."/>
            <person name="Kaminker J.S."/>
            <person name="Millburn G.H."/>
            <person name="Prochnik S.E."/>
            <person name="Smith C.D."/>
            <person name="Tupy J.L."/>
            <person name="Whitfield E.J."/>
            <person name="Bayraktaroglu L."/>
            <person name="Berman B.P."/>
            <person name="Bettencourt B.R."/>
            <person name="Celniker S.E."/>
            <person name="de Grey A.D.N.J."/>
            <person name="Drysdale R.A."/>
            <person name="Harris N.L."/>
            <person name="Richter J."/>
            <person name="Russo S."/>
            <person name="Schroeder A.J."/>
            <person name="Shu S.Q."/>
            <person name="Stapleton M."/>
            <person name="Yamada C."/>
            <person name="Ashburner M."/>
            <person name="Gelbart W.M."/>
            <person name="Rubin G.M."/>
            <person name="Lewis S.E."/>
        </authorList>
    </citation>
    <scope>GENOME REANNOTATION</scope>
    <source>
        <strain>Berkeley</strain>
    </source>
</reference>
<reference key="4">
    <citation type="submission" date="2006-06" db="EMBL/GenBank/DDBJ databases">
        <authorList>
            <person name="Stapleton M."/>
            <person name="Carlson J.W."/>
            <person name="Chavez C."/>
            <person name="Frise E."/>
            <person name="George R.A."/>
            <person name="Pacleb J.M."/>
            <person name="Park S."/>
            <person name="Wan K.H."/>
            <person name="Yu C."/>
            <person name="Celniker S.E."/>
        </authorList>
    </citation>
    <scope>NUCLEOTIDE SEQUENCE [LARGE SCALE MRNA]</scope>
    <source>
        <strain>Berkeley</strain>
        <tissue>Embryo</tissue>
    </source>
</reference>
<reference key="5">
    <citation type="journal article" date="2002" name="Genome Biol.">
        <title>A Drosophila full-length cDNA resource.</title>
        <authorList>
            <person name="Stapleton M."/>
            <person name="Carlson J.W."/>
            <person name="Brokstein P."/>
            <person name="Yu C."/>
            <person name="Champe M."/>
            <person name="George R.A."/>
            <person name="Guarin H."/>
            <person name="Kronmiller B."/>
            <person name="Pacleb J.M."/>
            <person name="Park S."/>
            <person name="Wan K.H."/>
            <person name="Rubin G.M."/>
            <person name="Celniker S.E."/>
        </authorList>
    </citation>
    <scope>NUCLEOTIDE SEQUENCE [LARGE SCALE MRNA] OF 333-1390</scope>
    <source>
        <strain>Berkeley</strain>
        <tissue>Embryo</tissue>
    </source>
</reference>
<reference key="6">
    <citation type="journal article" date="2007" name="Glycobiology">
        <title>Identification of N-glycosylated proteins from the central nervous system of Drosophila melanogaster.</title>
        <authorList>
            <person name="Koles K."/>
            <person name="Lim J.-M."/>
            <person name="Aoki K."/>
            <person name="Porterfield M."/>
            <person name="Tiemeyer M."/>
            <person name="Wells L."/>
            <person name="Panin V."/>
        </authorList>
    </citation>
    <scope>GLYCOSYLATION [LARGE SCALE ANALYSIS] AT ASN-912 AND ASN-1307</scope>
    <scope>IDENTIFICATION BY MASS SPECTROMETRY</scope>
    <source>
        <strain>Oregon-R</strain>
        <tissue>Head</tissue>
    </source>
</reference>
<reference key="7">
    <citation type="journal article" date="2009" name="Nat. Biotechnol.">
        <title>Mass-spectrometric identification and relative quantification of N-linked cell surface glycoproteins.</title>
        <authorList>
            <person name="Wollscheid B."/>
            <person name="Bausch-Fluck D."/>
            <person name="Henderson C."/>
            <person name="O'Brien R."/>
            <person name="Bibel M."/>
            <person name="Schiess R."/>
            <person name="Aebersold R."/>
            <person name="Watts J.D."/>
        </authorList>
    </citation>
    <scope>GLYCOSYLATION [LARGE SCALE ANALYSIS] AT ASN-369 AND ASN-912</scope>
    <scope>IDENTIFICATION BY MASS SPECTROMETRY</scope>
</reference>
<reference evidence="9" key="8">
    <citation type="journal article" date="2010" name="Nat. Cell Biol.">
        <title>Epithelial septate junction assembly relies on melanotransferrin iron binding and endocytosis in Drosophila.</title>
        <authorList>
            <person name="Tiklova K."/>
            <person name="Senti K.A."/>
            <person name="Wang S."/>
            <person name="Graeslund A."/>
            <person name="Samakovlis C."/>
        </authorList>
    </citation>
    <scope>IDENTIFICATION IN A COMPLEX WITH NRX-IV; TSF2 AND NRG</scope>
    <scope>SUBCELLULAR LOCATION</scope>
    <scope>DEVELOPMENTAL STAGE</scope>
</reference>
<comment type="function">
    <text evidence="5">Required for organization of septate junctions and paracellular barrier functions. Septate junctions, which are the equivalent of vertebrates tight junctions, are characterized by regular arrays of transverse structures that span the intermembrane space and form a physical barrier to diffusion.</text>
</comment>
<comment type="subunit">
    <text evidence="5 8">Forms a complex with Nrg and Nrx (PubMed:15459097). Forms a complex composed of septa junction proteins Nrx-IV/Nrx, Tsf2/MTf, Cont and Nrg during late embryogenesis (PubMed:20935638).</text>
</comment>
<comment type="subcellular location">
    <subcellularLocation>
        <location evidence="5">Cell membrane</location>
        <topology evidence="5">Lipid-anchor</topology>
        <topology evidence="5">GPI-anchor</topology>
    </subcellularLocation>
    <subcellularLocation>
        <location evidence="5 8">Cell junction</location>
        <location evidence="5 8">Septate junction</location>
    </subcellularLocation>
    <text>Nrx is required for its cell surface localization.</text>
</comment>
<comment type="tissue specificity">
    <text evidence="5">Expressed in ectodermally derived epithelial cells from stage 12. All these tissues, such as epidermis, hindgut, foregut, salivary glands and trachea, which contain pleated septate junctions. Expressed by ectodermally derived epithelial cells and along peripheral nerves. Not present in midline glial cells. Expressed in epithelial cells and glial cells of peripheral nerves.</text>
</comment>
<comment type="developmental stage">
    <text evidence="8">Expressed in embryos (at protein level).</text>
</comment>
<comment type="PTM">
    <text evidence="5 6 7">N-glycosylated.</text>
</comment>
<comment type="similarity">
    <text evidence="9">Belongs to the immunoglobulin superfamily. Contactin family.</text>
</comment>
<comment type="sequence caution" evidence="9">
    <conflict type="erroneous initiation">
        <sequence resource="EMBL-CDS" id="AAM11368"/>
    </conflict>
</comment>
<accession>Q9VN14</accession>
<accession>Q5BI91</accession>
<accession>Q8SWW3</accession>
<protein>
    <recommendedName>
        <fullName>Contactin</fullName>
    </recommendedName>
</protein>
<proteinExistence type="evidence at protein level"/>
<name>CONT_DROME</name>
<feature type="signal peptide" evidence="1">
    <location>
        <begin position="1"/>
        <end position="18"/>
    </location>
</feature>
<feature type="chain" id="PRO_0000014703" description="Contactin">
    <location>
        <begin position="19"/>
        <end position="1362"/>
    </location>
</feature>
<feature type="propeptide" id="PRO_0000014704" description="Removed in mature form" evidence="1">
    <location>
        <begin position="1363"/>
        <end position="1390"/>
    </location>
</feature>
<feature type="domain" description="Ig-like C2-type 1">
    <location>
        <begin position="362"/>
        <end position="463"/>
    </location>
</feature>
<feature type="domain" description="Ig-like C2-type 2">
    <location>
        <begin position="468"/>
        <end position="561"/>
    </location>
</feature>
<feature type="domain" description="Ig-like C2-type 3">
    <location>
        <begin position="576"/>
        <end position="656"/>
    </location>
</feature>
<feature type="domain" description="Ig-like C2-type 4">
    <location>
        <begin position="661"/>
        <end position="745"/>
    </location>
</feature>
<feature type="domain" description="Ig-like C2-type 5">
    <location>
        <begin position="756"/>
        <end position="843"/>
    </location>
</feature>
<feature type="domain" description="Ig-like C2-type 6">
    <location>
        <begin position="848"/>
        <end position="939"/>
    </location>
</feature>
<feature type="domain" description="Fibronectin type-III 1" evidence="3">
    <location>
        <begin position="946"/>
        <end position="1048"/>
    </location>
</feature>
<feature type="domain" description="Fibronectin type-III 2" evidence="3">
    <location>
        <begin position="1053"/>
        <end position="1151"/>
    </location>
</feature>
<feature type="domain" description="Fibronectin type-III 3" evidence="3">
    <location>
        <begin position="1156"/>
        <end position="1254"/>
    </location>
</feature>
<feature type="domain" description="Fibronectin type-III 4" evidence="3">
    <location>
        <begin position="1259"/>
        <end position="1357"/>
    </location>
</feature>
<feature type="region of interest" description="Disordered" evidence="4">
    <location>
        <begin position="25"/>
        <end position="67"/>
    </location>
</feature>
<feature type="compositionally biased region" description="Polar residues" evidence="4">
    <location>
        <begin position="58"/>
        <end position="67"/>
    </location>
</feature>
<feature type="lipid moiety-binding region" description="GPI-anchor amidated alanine" evidence="1">
    <location>
        <position position="1362"/>
    </location>
</feature>
<feature type="glycosylation site" description="N-linked (GlcNAc...) asparagine" evidence="7">
    <location>
        <position position="369"/>
    </location>
</feature>
<feature type="glycosylation site" description="N-linked (GlcNAc...) asparagine" evidence="1">
    <location>
        <position position="537"/>
    </location>
</feature>
<feature type="glycosylation site" description="N-linked (GlcNAc...) asparagine" evidence="1">
    <location>
        <position position="604"/>
    </location>
</feature>
<feature type="glycosylation site" description="N-linked (GlcNAc...) asparagine" evidence="1">
    <location>
        <position position="629"/>
    </location>
</feature>
<feature type="glycosylation site" description="N-linked (GlcNAc...) asparagine" evidence="1">
    <location>
        <position position="691"/>
    </location>
</feature>
<feature type="glycosylation site" description="N-linked (GlcNAc...) asparagine" evidence="1">
    <location>
        <position position="774"/>
    </location>
</feature>
<feature type="glycosylation site" description="N-linked (GlcNAc...) asparagine" evidence="6 7">
    <location>
        <position position="912"/>
    </location>
</feature>
<feature type="glycosylation site" description="N-linked (GlcNAc...) asparagine" evidence="1">
    <location>
        <position position="986"/>
    </location>
</feature>
<feature type="glycosylation site" description="N-linked (GlcNAc...) asparagine" evidence="1">
    <location>
        <position position="991"/>
    </location>
</feature>
<feature type="glycosylation site" description="N-linked (GlcNAc...) asparagine" evidence="1">
    <location>
        <position position="1166"/>
    </location>
</feature>
<feature type="glycosylation site" description="N-linked (GlcNAc...) asparagine" evidence="1">
    <location>
        <position position="1171"/>
    </location>
</feature>
<feature type="glycosylation site" description="N-linked (GlcNAc...) asparagine" evidence="6">
    <location>
        <position position="1307"/>
    </location>
</feature>
<feature type="disulfide bond" evidence="2">
    <location>
        <begin position="388"/>
        <end position="446"/>
    </location>
</feature>
<feature type="disulfide bond" evidence="2">
    <location>
        <begin position="489"/>
        <end position="540"/>
    </location>
</feature>
<feature type="disulfide bond" evidence="2">
    <location>
        <begin position="593"/>
        <end position="640"/>
    </location>
</feature>
<feature type="disulfide bond" evidence="2">
    <location>
        <begin position="682"/>
        <end position="734"/>
    </location>
</feature>
<feature type="disulfide bond" evidence="2">
    <location>
        <begin position="779"/>
        <end position="827"/>
    </location>
</feature>
<feature type="disulfide bond" evidence="2">
    <location>
        <begin position="870"/>
        <end position="923"/>
    </location>
</feature>
<gene>
    <name type="primary">Cont</name>
    <name type="ORF">CG1084</name>
</gene>
<evidence type="ECO:0000255" key="1"/>
<evidence type="ECO:0000255" key="2">
    <source>
        <dbReference type="PROSITE-ProRule" id="PRU00114"/>
    </source>
</evidence>
<evidence type="ECO:0000255" key="3">
    <source>
        <dbReference type="PROSITE-ProRule" id="PRU00316"/>
    </source>
</evidence>
<evidence type="ECO:0000256" key="4">
    <source>
        <dbReference type="SAM" id="MobiDB-lite"/>
    </source>
</evidence>
<evidence type="ECO:0000269" key="5">
    <source>
    </source>
</evidence>
<evidence type="ECO:0000269" key="6">
    <source>
    </source>
</evidence>
<evidence type="ECO:0000269" key="7">
    <source>
    </source>
</evidence>
<evidence type="ECO:0000269" key="8">
    <source>
    </source>
</evidence>
<evidence type="ECO:0000305" key="9"/>